<proteinExistence type="inferred from homology"/>
<comment type="function">
    <text evidence="1">Tetrapolymerization of the monopyrrole PBG into the hydroxymethylbilane pre-uroporphyrinogen in several discrete steps.</text>
</comment>
<comment type="catalytic activity">
    <reaction evidence="1">
        <text>4 porphobilinogen + H2O = hydroxymethylbilane + 4 NH4(+)</text>
        <dbReference type="Rhea" id="RHEA:13185"/>
        <dbReference type="ChEBI" id="CHEBI:15377"/>
        <dbReference type="ChEBI" id="CHEBI:28938"/>
        <dbReference type="ChEBI" id="CHEBI:57845"/>
        <dbReference type="ChEBI" id="CHEBI:58126"/>
        <dbReference type="EC" id="2.5.1.61"/>
    </reaction>
</comment>
<comment type="cofactor">
    <cofactor evidence="1">
        <name>dipyrromethane</name>
        <dbReference type="ChEBI" id="CHEBI:60342"/>
    </cofactor>
    <text evidence="1">Binds 1 dipyrromethane group covalently.</text>
</comment>
<comment type="pathway">
    <text evidence="1">Porphyrin-containing compound metabolism; protoporphyrin-IX biosynthesis; coproporphyrinogen-III from 5-aminolevulinate: step 2/4.</text>
</comment>
<comment type="subunit">
    <text evidence="1">Monomer.</text>
</comment>
<comment type="miscellaneous">
    <text evidence="1">The porphobilinogen subunits are added to the dipyrromethane group.</text>
</comment>
<comment type="similarity">
    <text evidence="1">Belongs to the HMBS family.</text>
</comment>
<feature type="chain" id="PRO_1000119217" description="Porphobilinogen deaminase">
    <location>
        <begin position="1"/>
        <end position="313"/>
    </location>
</feature>
<feature type="modified residue" description="S-(dipyrrolylmethanemethyl)cysteine" evidence="1">
    <location>
        <position position="242"/>
    </location>
</feature>
<dbReference type="EC" id="2.5.1.61" evidence="1"/>
<dbReference type="EMBL" id="CU928163">
    <property type="protein sequence ID" value="CAR15462.1"/>
    <property type="molecule type" value="Genomic_DNA"/>
</dbReference>
<dbReference type="RefSeq" id="WP_001303155.1">
    <property type="nucleotide sequence ID" value="NC_011751.1"/>
</dbReference>
<dbReference type="RefSeq" id="YP_002414958.1">
    <property type="nucleotide sequence ID" value="NC_011751.1"/>
</dbReference>
<dbReference type="SMR" id="B7NFA7"/>
<dbReference type="STRING" id="585056.ECUMN_4329"/>
<dbReference type="KEGG" id="eum:ECUMN_4329"/>
<dbReference type="PATRIC" id="fig|585056.7.peg.4494"/>
<dbReference type="HOGENOM" id="CLU_019704_0_2_6"/>
<dbReference type="UniPathway" id="UPA00251">
    <property type="reaction ID" value="UER00319"/>
</dbReference>
<dbReference type="Proteomes" id="UP000007097">
    <property type="component" value="Chromosome"/>
</dbReference>
<dbReference type="GO" id="GO:0005737">
    <property type="term" value="C:cytoplasm"/>
    <property type="evidence" value="ECO:0007669"/>
    <property type="project" value="TreeGrafter"/>
</dbReference>
<dbReference type="GO" id="GO:0004418">
    <property type="term" value="F:hydroxymethylbilane synthase activity"/>
    <property type="evidence" value="ECO:0007669"/>
    <property type="project" value="UniProtKB-UniRule"/>
</dbReference>
<dbReference type="GO" id="GO:0006782">
    <property type="term" value="P:protoporphyrinogen IX biosynthetic process"/>
    <property type="evidence" value="ECO:0007669"/>
    <property type="project" value="UniProtKB-UniRule"/>
</dbReference>
<dbReference type="CDD" id="cd13646">
    <property type="entry name" value="PBP2_EcHMBS_like"/>
    <property type="match status" value="1"/>
</dbReference>
<dbReference type="FunFam" id="3.30.160.40:FF:000002">
    <property type="entry name" value="Porphobilinogen deaminase"/>
    <property type="match status" value="1"/>
</dbReference>
<dbReference type="FunFam" id="3.40.190.10:FF:000004">
    <property type="entry name" value="Porphobilinogen deaminase"/>
    <property type="match status" value="1"/>
</dbReference>
<dbReference type="FunFam" id="3.40.190.10:FF:000005">
    <property type="entry name" value="Porphobilinogen deaminase"/>
    <property type="match status" value="1"/>
</dbReference>
<dbReference type="Gene3D" id="3.40.190.10">
    <property type="entry name" value="Periplasmic binding protein-like II"/>
    <property type="match status" value="2"/>
</dbReference>
<dbReference type="Gene3D" id="3.30.160.40">
    <property type="entry name" value="Porphobilinogen deaminase, C-terminal domain"/>
    <property type="match status" value="1"/>
</dbReference>
<dbReference type="HAMAP" id="MF_00260">
    <property type="entry name" value="Porphobil_deam"/>
    <property type="match status" value="1"/>
</dbReference>
<dbReference type="InterPro" id="IPR000860">
    <property type="entry name" value="HemC"/>
</dbReference>
<dbReference type="InterPro" id="IPR022419">
    <property type="entry name" value="Porphobilin_deaminase_cofac_BS"/>
</dbReference>
<dbReference type="InterPro" id="IPR022417">
    <property type="entry name" value="Porphobilin_deaminase_N"/>
</dbReference>
<dbReference type="InterPro" id="IPR022418">
    <property type="entry name" value="Porphobilinogen_deaminase_C"/>
</dbReference>
<dbReference type="InterPro" id="IPR036803">
    <property type="entry name" value="Porphobilinogen_deaminase_C_sf"/>
</dbReference>
<dbReference type="NCBIfam" id="TIGR00212">
    <property type="entry name" value="hemC"/>
    <property type="match status" value="1"/>
</dbReference>
<dbReference type="PANTHER" id="PTHR11557">
    <property type="entry name" value="PORPHOBILINOGEN DEAMINASE"/>
    <property type="match status" value="1"/>
</dbReference>
<dbReference type="PANTHER" id="PTHR11557:SF0">
    <property type="entry name" value="PORPHOBILINOGEN DEAMINASE"/>
    <property type="match status" value="1"/>
</dbReference>
<dbReference type="Pfam" id="PF01379">
    <property type="entry name" value="Porphobil_deam"/>
    <property type="match status" value="1"/>
</dbReference>
<dbReference type="Pfam" id="PF03900">
    <property type="entry name" value="Porphobil_deamC"/>
    <property type="match status" value="1"/>
</dbReference>
<dbReference type="PIRSF" id="PIRSF001438">
    <property type="entry name" value="4pyrrol_synth_OHMeBilane_synth"/>
    <property type="match status" value="1"/>
</dbReference>
<dbReference type="PRINTS" id="PR00151">
    <property type="entry name" value="PORPHBDMNASE"/>
</dbReference>
<dbReference type="SUPFAM" id="SSF53850">
    <property type="entry name" value="Periplasmic binding protein-like II"/>
    <property type="match status" value="1"/>
</dbReference>
<dbReference type="SUPFAM" id="SSF54782">
    <property type="entry name" value="Porphobilinogen deaminase (hydroxymethylbilane synthase), C-terminal domain"/>
    <property type="match status" value="1"/>
</dbReference>
<dbReference type="PROSITE" id="PS00533">
    <property type="entry name" value="PORPHOBILINOGEN_DEAM"/>
    <property type="match status" value="1"/>
</dbReference>
<keyword id="KW-0627">Porphyrin biosynthesis</keyword>
<keyword id="KW-0808">Transferase</keyword>
<accession>B7NFA7</accession>
<reference key="1">
    <citation type="journal article" date="2009" name="PLoS Genet.">
        <title>Organised genome dynamics in the Escherichia coli species results in highly diverse adaptive paths.</title>
        <authorList>
            <person name="Touchon M."/>
            <person name="Hoede C."/>
            <person name="Tenaillon O."/>
            <person name="Barbe V."/>
            <person name="Baeriswyl S."/>
            <person name="Bidet P."/>
            <person name="Bingen E."/>
            <person name="Bonacorsi S."/>
            <person name="Bouchier C."/>
            <person name="Bouvet O."/>
            <person name="Calteau A."/>
            <person name="Chiapello H."/>
            <person name="Clermont O."/>
            <person name="Cruveiller S."/>
            <person name="Danchin A."/>
            <person name="Diard M."/>
            <person name="Dossat C."/>
            <person name="Karoui M.E."/>
            <person name="Frapy E."/>
            <person name="Garry L."/>
            <person name="Ghigo J.M."/>
            <person name="Gilles A.M."/>
            <person name="Johnson J."/>
            <person name="Le Bouguenec C."/>
            <person name="Lescat M."/>
            <person name="Mangenot S."/>
            <person name="Martinez-Jehanne V."/>
            <person name="Matic I."/>
            <person name="Nassif X."/>
            <person name="Oztas S."/>
            <person name="Petit M.A."/>
            <person name="Pichon C."/>
            <person name="Rouy Z."/>
            <person name="Ruf C.S."/>
            <person name="Schneider D."/>
            <person name="Tourret J."/>
            <person name="Vacherie B."/>
            <person name="Vallenet D."/>
            <person name="Medigue C."/>
            <person name="Rocha E.P.C."/>
            <person name="Denamur E."/>
        </authorList>
    </citation>
    <scope>NUCLEOTIDE SEQUENCE [LARGE SCALE GENOMIC DNA]</scope>
    <source>
        <strain>UMN026 / ExPEC</strain>
    </source>
</reference>
<name>HEM3_ECOLU</name>
<organism>
    <name type="scientific">Escherichia coli O17:K52:H18 (strain UMN026 / ExPEC)</name>
    <dbReference type="NCBI Taxonomy" id="585056"/>
    <lineage>
        <taxon>Bacteria</taxon>
        <taxon>Pseudomonadati</taxon>
        <taxon>Pseudomonadota</taxon>
        <taxon>Gammaproteobacteria</taxon>
        <taxon>Enterobacterales</taxon>
        <taxon>Enterobacteriaceae</taxon>
        <taxon>Escherichia</taxon>
    </lineage>
</organism>
<evidence type="ECO:0000255" key="1">
    <source>
        <dbReference type="HAMAP-Rule" id="MF_00260"/>
    </source>
</evidence>
<protein>
    <recommendedName>
        <fullName evidence="1">Porphobilinogen deaminase</fullName>
        <shortName evidence="1">PBG</shortName>
        <ecNumber evidence="1">2.5.1.61</ecNumber>
    </recommendedName>
    <alternativeName>
        <fullName evidence="1">Hydroxymethylbilane synthase</fullName>
        <shortName evidence="1">HMBS</shortName>
    </alternativeName>
    <alternativeName>
        <fullName evidence="1">Pre-uroporphyrinogen synthase</fullName>
    </alternativeName>
</protein>
<sequence length="313" mass="33866">MLDNVLRIATRQSPLALWQAHYVKDKLMASHPGLVVELVPMVTRGDVILDTPLAKVGGKGLFVKELEVALLENRADIAVHSMKDVPVEFPQGLGLVTICEREDPRDAFVSNNYDSLDALPAGSIVGTSSLRRQCQLAERRPDLIIRSLRGNVGTRLSKLDNGEYDAIILAVAGLKRLGLESRIRAALPPEISLPAVGQGAVGIECRLDDTRTRELLAALNHHETALRVTAERAMNTRLEGGCQVPIGSYAELIDGEIWLRALVGAPDGSQIIRGERRGAPQDAEQMGISLAEELLNNGAREILAEVYNGDAPA</sequence>
<gene>
    <name evidence="1" type="primary">hemC</name>
    <name type="ordered locus">ECUMN_4329</name>
</gene>